<feature type="chain" id="PRO_0000140798" description="3-dehydroquinate synthase">
    <location>
        <begin position="1"/>
        <end position="368"/>
    </location>
</feature>
<feature type="binding site" evidence="1">
    <location>
        <begin position="110"/>
        <end position="114"/>
    </location>
    <ligand>
        <name>NAD(+)</name>
        <dbReference type="ChEBI" id="CHEBI:57540"/>
    </ligand>
</feature>
<feature type="binding site" evidence="1">
    <location>
        <begin position="134"/>
        <end position="135"/>
    </location>
    <ligand>
        <name>NAD(+)</name>
        <dbReference type="ChEBI" id="CHEBI:57540"/>
    </ligand>
</feature>
<feature type="binding site" evidence="1">
    <location>
        <position position="147"/>
    </location>
    <ligand>
        <name>NAD(+)</name>
        <dbReference type="ChEBI" id="CHEBI:57540"/>
    </ligand>
</feature>
<feature type="binding site" evidence="1">
    <location>
        <position position="156"/>
    </location>
    <ligand>
        <name>NAD(+)</name>
        <dbReference type="ChEBI" id="CHEBI:57540"/>
    </ligand>
</feature>
<feature type="binding site" evidence="1">
    <location>
        <position position="189"/>
    </location>
    <ligand>
        <name>Zn(2+)</name>
        <dbReference type="ChEBI" id="CHEBI:29105"/>
    </ligand>
</feature>
<feature type="binding site" evidence="1">
    <location>
        <position position="254"/>
    </location>
    <ligand>
        <name>Zn(2+)</name>
        <dbReference type="ChEBI" id="CHEBI:29105"/>
    </ligand>
</feature>
<feature type="binding site" evidence="1">
    <location>
        <position position="271"/>
    </location>
    <ligand>
        <name>Zn(2+)</name>
        <dbReference type="ChEBI" id="CHEBI:29105"/>
    </ligand>
</feature>
<protein>
    <recommendedName>
        <fullName evidence="1">3-dehydroquinate synthase</fullName>
        <shortName evidence="1">DHQS</shortName>
        <ecNumber evidence="1">4.2.3.4</ecNumber>
    </recommendedName>
</protein>
<comment type="function">
    <text evidence="1">Catalyzes the conversion of 3-deoxy-D-arabino-heptulosonate 7-phosphate (DAHP) to dehydroquinate (DHQ).</text>
</comment>
<comment type="catalytic activity">
    <reaction evidence="1">
        <text>7-phospho-2-dehydro-3-deoxy-D-arabino-heptonate = 3-dehydroquinate + phosphate</text>
        <dbReference type="Rhea" id="RHEA:21968"/>
        <dbReference type="ChEBI" id="CHEBI:32364"/>
        <dbReference type="ChEBI" id="CHEBI:43474"/>
        <dbReference type="ChEBI" id="CHEBI:58394"/>
        <dbReference type="EC" id="4.2.3.4"/>
    </reaction>
</comment>
<comment type="cofactor">
    <cofactor evidence="1">
        <name>NAD(+)</name>
        <dbReference type="ChEBI" id="CHEBI:57540"/>
    </cofactor>
</comment>
<comment type="cofactor">
    <cofactor evidence="1">
        <name>Co(2+)</name>
        <dbReference type="ChEBI" id="CHEBI:48828"/>
    </cofactor>
    <cofactor evidence="1">
        <name>Zn(2+)</name>
        <dbReference type="ChEBI" id="CHEBI:29105"/>
    </cofactor>
    <text evidence="1">Binds 1 divalent metal cation per subunit. Can use either Co(2+) or Zn(2+).</text>
</comment>
<comment type="pathway">
    <text evidence="1">Metabolic intermediate biosynthesis; chorismate biosynthesis; chorismate from D-erythrose 4-phosphate and phosphoenolpyruvate: step 2/7.</text>
</comment>
<comment type="subcellular location">
    <subcellularLocation>
        <location evidence="1">Cytoplasm</location>
    </subcellularLocation>
</comment>
<comment type="similarity">
    <text evidence="1">Belongs to the sugar phosphate cyclases superfamily. Dehydroquinate synthase family.</text>
</comment>
<comment type="sequence caution" evidence="2">
    <conflict type="erroneous initiation">
        <sequence resource="EMBL-CDS" id="BAC08335"/>
    </conflict>
</comment>
<reference key="1">
    <citation type="journal article" date="2002" name="DNA Res.">
        <title>Complete genome structure of the thermophilic cyanobacterium Thermosynechococcus elongatus BP-1.</title>
        <authorList>
            <person name="Nakamura Y."/>
            <person name="Kaneko T."/>
            <person name="Sato S."/>
            <person name="Ikeuchi M."/>
            <person name="Katoh H."/>
            <person name="Sasamoto S."/>
            <person name="Watanabe A."/>
            <person name="Iriguchi M."/>
            <person name="Kawashima K."/>
            <person name="Kimura T."/>
            <person name="Kishida Y."/>
            <person name="Kiyokawa C."/>
            <person name="Kohara M."/>
            <person name="Matsumoto M."/>
            <person name="Matsuno A."/>
            <person name="Nakazaki N."/>
            <person name="Shimpo S."/>
            <person name="Sugimoto M."/>
            <person name="Takeuchi C."/>
            <person name="Yamada M."/>
            <person name="Tabata S."/>
        </authorList>
    </citation>
    <scope>NUCLEOTIDE SEQUENCE [LARGE SCALE GENOMIC DNA]</scope>
    <source>
        <strain>NIES-2133 / IAM M-273 / BP-1</strain>
    </source>
</reference>
<dbReference type="EC" id="4.2.3.4" evidence="1"/>
<dbReference type="EMBL" id="BA000039">
    <property type="protein sequence ID" value="BAC08335.1"/>
    <property type="status" value="ALT_INIT"/>
    <property type="molecule type" value="Genomic_DNA"/>
</dbReference>
<dbReference type="RefSeq" id="NP_681573.2">
    <property type="nucleotide sequence ID" value="NC_004113.1"/>
</dbReference>
<dbReference type="RefSeq" id="WP_011056627.1">
    <property type="nucleotide sequence ID" value="NC_004113.1"/>
</dbReference>
<dbReference type="SMR" id="Q8DKS3"/>
<dbReference type="STRING" id="197221.gene:10747375"/>
<dbReference type="EnsemblBacteria" id="BAC08335">
    <property type="protein sequence ID" value="BAC08335"/>
    <property type="gene ID" value="BAC08335"/>
</dbReference>
<dbReference type="KEGG" id="tel:tlr0784"/>
<dbReference type="PATRIC" id="fig|197221.4.peg.823"/>
<dbReference type="eggNOG" id="COG0337">
    <property type="taxonomic scope" value="Bacteria"/>
</dbReference>
<dbReference type="UniPathway" id="UPA00053">
    <property type="reaction ID" value="UER00085"/>
</dbReference>
<dbReference type="Proteomes" id="UP000000440">
    <property type="component" value="Chromosome"/>
</dbReference>
<dbReference type="GO" id="GO:0005737">
    <property type="term" value="C:cytoplasm"/>
    <property type="evidence" value="ECO:0007669"/>
    <property type="project" value="UniProtKB-SubCell"/>
</dbReference>
<dbReference type="GO" id="GO:0003856">
    <property type="term" value="F:3-dehydroquinate synthase activity"/>
    <property type="evidence" value="ECO:0007669"/>
    <property type="project" value="UniProtKB-UniRule"/>
</dbReference>
<dbReference type="GO" id="GO:0046872">
    <property type="term" value="F:metal ion binding"/>
    <property type="evidence" value="ECO:0007669"/>
    <property type="project" value="UniProtKB-KW"/>
</dbReference>
<dbReference type="GO" id="GO:0000166">
    <property type="term" value="F:nucleotide binding"/>
    <property type="evidence" value="ECO:0007669"/>
    <property type="project" value="UniProtKB-KW"/>
</dbReference>
<dbReference type="GO" id="GO:0008652">
    <property type="term" value="P:amino acid biosynthetic process"/>
    <property type="evidence" value="ECO:0007669"/>
    <property type="project" value="UniProtKB-KW"/>
</dbReference>
<dbReference type="GO" id="GO:0009073">
    <property type="term" value="P:aromatic amino acid family biosynthetic process"/>
    <property type="evidence" value="ECO:0007669"/>
    <property type="project" value="UniProtKB-KW"/>
</dbReference>
<dbReference type="GO" id="GO:0009423">
    <property type="term" value="P:chorismate biosynthetic process"/>
    <property type="evidence" value="ECO:0007669"/>
    <property type="project" value="UniProtKB-UniRule"/>
</dbReference>
<dbReference type="CDD" id="cd08195">
    <property type="entry name" value="DHQS"/>
    <property type="match status" value="1"/>
</dbReference>
<dbReference type="FunFam" id="3.40.50.1970:FF:000007">
    <property type="entry name" value="Pentafunctional AROM polypeptide"/>
    <property type="match status" value="1"/>
</dbReference>
<dbReference type="Gene3D" id="3.40.50.1970">
    <property type="match status" value="1"/>
</dbReference>
<dbReference type="Gene3D" id="1.20.1090.10">
    <property type="entry name" value="Dehydroquinate synthase-like - alpha domain"/>
    <property type="match status" value="1"/>
</dbReference>
<dbReference type="HAMAP" id="MF_00110">
    <property type="entry name" value="DHQ_synthase"/>
    <property type="match status" value="1"/>
</dbReference>
<dbReference type="InterPro" id="IPR050071">
    <property type="entry name" value="Dehydroquinate_synthase"/>
</dbReference>
<dbReference type="InterPro" id="IPR016037">
    <property type="entry name" value="DHQ_synth_AroB"/>
</dbReference>
<dbReference type="InterPro" id="IPR030963">
    <property type="entry name" value="DHQ_synth_fam"/>
</dbReference>
<dbReference type="InterPro" id="IPR030960">
    <property type="entry name" value="DHQS/DOIS_N"/>
</dbReference>
<dbReference type="InterPro" id="IPR056179">
    <property type="entry name" value="DHQS_C"/>
</dbReference>
<dbReference type="NCBIfam" id="TIGR01357">
    <property type="entry name" value="aroB"/>
    <property type="match status" value="1"/>
</dbReference>
<dbReference type="PANTHER" id="PTHR43622">
    <property type="entry name" value="3-DEHYDROQUINATE SYNTHASE"/>
    <property type="match status" value="1"/>
</dbReference>
<dbReference type="PANTHER" id="PTHR43622:SF7">
    <property type="entry name" value="3-DEHYDROQUINATE SYNTHASE, CHLOROPLASTIC"/>
    <property type="match status" value="1"/>
</dbReference>
<dbReference type="Pfam" id="PF01761">
    <property type="entry name" value="DHQ_synthase"/>
    <property type="match status" value="1"/>
</dbReference>
<dbReference type="Pfam" id="PF24621">
    <property type="entry name" value="DHQS_C"/>
    <property type="match status" value="1"/>
</dbReference>
<dbReference type="PIRSF" id="PIRSF001455">
    <property type="entry name" value="DHQ_synth"/>
    <property type="match status" value="1"/>
</dbReference>
<dbReference type="SUPFAM" id="SSF56796">
    <property type="entry name" value="Dehydroquinate synthase-like"/>
    <property type="match status" value="1"/>
</dbReference>
<organism>
    <name type="scientific">Thermosynechococcus vestitus (strain NIES-2133 / IAM M-273 / BP-1)</name>
    <dbReference type="NCBI Taxonomy" id="197221"/>
    <lineage>
        <taxon>Bacteria</taxon>
        <taxon>Bacillati</taxon>
        <taxon>Cyanobacteriota</taxon>
        <taxon>Cyanophyceae</taxon>
        <taxon>Acaryochloridales</taxon>
        <taxon>Thermosynechococcaceae</taxon>
        <taxon>Thermosynechococcus</taxon>
    </lineage>
</organism>
<keyword id="KW-0028">Amino-acid biosynthesis</keyword>
<keyword id="KW-0057">Aromatic amino acid biosynthesis</keyword>
<keyword id="KW-0170">Cobalt</keyword>
<keyword id="KW-0963">Cytoplasm</keyword>
<keyword id="KW-0456">Lyase</keyword>
<keyword id="KW-0479">Metal-binding</keyword>
<keyword id="KW-0520">NAD</keyword>
<keyword id="KW-0547">Nucleotide-binding</keyword>
<keyword id="KW-1185">Reference proteome</keyword>
<keyword id="KW-0862">Zinc</keyword>
<sequence>MTTLIPVPLGEHSYRIAIGANTRRQLPALLAAYTPLTPKAPALIVSNPQIWRHYGTDVQGALTQAGWQVTPCILPAGERYKTLRTVEKIYDAALSQRLERGSTLFALGGGVIGDMTGFAAATWLRGIAVVQIPTSLLAMVDAAIGGKTGVNHPQGKNLIGAFHQPRLVVIDPDVLATLPPREFRAGMAEVIKYGVIWDAELFHLLSQLPRLDCMGALPSEQFIQVLRRSCQAKVDVVSKDEREAGLRAILNYGHTIGHALESIGNYRLLNHGEAVAIGMIAAGELAVALGYWSAEAAAAQRALILKAKLPTTIPPHFDVEGLLALLQHDKKVQAQNVRFILPTAIGHGQICDQVPAELIRETLHRLQA</sequence>
<name>AROB_THEVB</name>
<evidence type="ECO:0000255" key="1">
    <source>
        <dbReference type="HAMAP-Rule" id="MF_00110"/>
    </source>
</evidence>
<evidence type="ECO:0000305" key="2"/>
<gene>
    <name evidence="1" type="primary">aroB</name>
    <name type="ordered locus">tlr0784</name>
</gene>
<proteinExistence type="inferred from homology"/>
<accession>Q8DKS3</accession>